<evidence type="ECO:0000250" key="1"/>
<evidence type="ECO:0000305" key="2"/>
<comment type="function">
    <text evidence="1">Involved in base excision repair of DNA damaged by oxidation or by mutagenic agents. Acts as a DNA glycosylase that recognizes and removes damaged bases. Has a preference for oxidized purines, such as 7,8-dihydro-8-oxoguanine (8-oxoG). Has AP (apurinic/apyrimidinic) lyase activity and introduces nicks in the DNA strand. Cleaves the DNA backbone by beta-delta elimination to generate a single-strand break at the site of the removed base with both 3'- and 5'-phosphates (By similarity).</text>
</comment>
<comment type="catalytic activity">
    <reaction>
        <text>Hydrolysis of DNA containing ring-opened 7-methylguanine residues, releasing 2,6-diamino-4-hydroxy-5-(N-methyl)formamidopyrimidine.</text>
        <dbReference type="EC" id="3.2.2.23"/>
    </reaction>
</comment>
<comment type="catalytic activity">
    <reaction>
        <text>2'-deoxyribonucleotide-(2'-deoxyribose 5'-phosphate)-2'-deoxyribonucleotide-DNA = a 3'-end 2'-deoxyribonucleotide-(2,3-dehydro-2,3-deoxyribose 5'-phosphate)-DNA + a 5'-end 5'-phospho-2'-deoxyribonucleoside-DNA + H(+)</text>
        <dbReference type="Rhea" id="RHEA:66592"/>
        <dbReference type="Rhea" id="RHEA-COMP:13180"/>
        <dbReference type="Rhea" id="RHEA-COMP:16897"/>
        <dbReference type="Rhea" id="RHEA-COMP:17067"/>
        <dbReference type="ChEBI" id="CHEBI:15378"/>
        <dbReference type="ChEBI" id="CHEBI:136412"/>
        <dbReference type="ChEBI" id="CHEBI:157695"/>
        <dbReference type="ChEBI" id="CHEBI:167181"/>
        <dbReference type="EC" id="4.2.99.18"/>
    </reaction>
</comment>
<comment type="cofactor">
    <cofactor evidence="1">
        <name>Zn(2+)</name>
        <dbReference type="ChEBI" id="CHEBI:29105"/>
    </cofactor>
    <text evidence="1">Binds 1 zinc ion per subunit.</text>
</comment>
<comment type="subunit">
    <text evidence="1">Monomer.</text>
</comment>
<comment type="similarity">
    <text evidence="2">Belongs to the FPG family.</text>
</comment>
<name>FPG_THEVB</name>
<dbReference type="EC" id="3.2.2.23"/>
<dbReference type="EC" id="4.2.99.18"/>
<dbReference type="EMBL" id="BA000039">
    <property type="protein sequence ID" value="BAC09118.1"/>
    <property type="molecule type" value="Genomic_DNA"/>
</dbReference>
<dbReference type="RefSeq" id="NP_682356.1">
    <property type="nucleotide sequence ID" value="NC_004113.1"/>
</dbReference>
<dbReference type="RefSeq" id="WP_011057406.1">
    <property type="nucleotide sequence ID" value="NC_004113.1"/>
</dbReference>
<dbReference type="SMR" id="P59065"/>
<dbReference type="STRING" id="197221.gene:10748168"/>
<dbReference type="EnsemblBacteria" id="BAC09118">
    <property type="protein sequence ID" value="BAC09118"/>
    <property type="gene ID" value="BAC09118"/>
</dbReference>
<dbReference type="KEGG" id="tel:tll1566"/>
<dbReference type="PATRIC" id="fig|197221.4.peg.1642"/>
<dbReference type="eggNOG" id="COG0266">
    <property type="taxonomic scope" value="Bacteria"/>
</dbReference>
<dbReference type="Proteomes" id="UP000000440">
    <property type="component" value="Chromosome"/>
</dbReference>
<dbReference type="GO" id="GO:0034039">
    <property type="term" value="F:8-oxo-7,8-dihydroguanine DNA N-glycosylase activity"/>
    <property type="evidence" value="ECO:0007669"/>
    <property type="project" value="TreeGrafter"/>
</dbReference>
<dbReference type="GO" id="GO:0140078">
    <property type="term" value="F:class I DNA-(apurinic or apyrimidinic site) endonuclease activity"/>
    <property type="evidence" value="ECO:0007669"/>
    <property type="project" value="UniProtKB-EC"/>
</dbReference>
<dbReference type="GO" id="GO:0003684">
    <property type="term" value="F:damaged DNA binding"/>
    <property type="evidence" value="ECO:0007669"/>
    <property type="project" value="InterPro"/>
</dbReference>
<dbReference type="GO" id="GO:0008270">
    <property type="term" value="F:zinc ion binding"/>
    <property type="evidence" value="ECO:0007669"/>
    <property type="project" value="UniProtKB-UniRule"/>
</dbReference>
<dbReference type="GO" id="GO:0006284">
    <property type="term" value="P:base-excision repair"/>
    <property type="evidence" value="ECO:0007669"/>
    <property type="project" value="InterPro"/>
</dbReference>
<dbReference type="CDD" id="cd08966">
    <property type="entry name" value="EcFpg-like_N"/>
    <property type="match status" value="1"/>
</dbReference>
<dbReference type="FunFam" id="1.10.8.50:FF:000003">
    <property type="entry name" value="Formamidopyrimidine-DNA glycosylase"/>
    <property type="match status" value="1"/>
</dbReference>
<dbReference type="Gene3D" id="1.10.8.50">
    <property type="match status" value="1"/>
</dbReference>
<dbReference type="Gene3D" id="3.20.190.10">
    <property type="entry name" value="MutM-like, N-terminal"/>
    <property type="match status" value="1"/>
</dbReference>
<dbReference type="HAMAP" id="MF_00103">
    <property type="entry name" value="Fapy_DNA_glycosyl"/>
    <property type="match status" value="1"/>
</dbReference>
<dbReference type="InterPro" id="IPR015886">
    <property type="entry name" value="DNA_glyclase/AP_lyase_DNA-bd"/>
</dbReference>
<dbReference type="InterPro" id="IPR015887">
    <property type="entry name" value="DNA_glyclase_Znf_dom_DNA_BS"/>
</dbReference>
<dbReference type="InterPro" id="IPR020629">
    <property type="entry name" value="Formamido-pyr_DNA_Glyclase"/>
</dbReference>
<dbReference type="InterPro" id="IPR012319">
    <property type="entry name" value="FPG_cat"/>
</dbReference>
<dbReference type="InterPro" id="IPR035937">
    <property type="entry name" value="MutM-like_N-ter"/>
</dbReference>
<dbReference type="InterPro" id="IPR010979">
    <property type="entry name" value="Ribosomal_uS13-like_H2TH"/>
</dbReference>
<dbReference type="InterPro" id="IPR000214">
    <property type="entry name" value="Znf_DNA_glyclase/AP_lyase"/>
</dbReference>
<dbReference type="InterPro" id="IPR010663">
    <property type="entry name" value="Znf_FPG/IleRS"/>
</dbReference>
<dbReference type="NCBIfam" id="TIGR00577">
    <property type="entry name" value="fpg"/>
    <property type="match status" value="1"/>
</dbReference>
<dbReference type="NCBIfam" id="NF002211">
    <property type="entry name" value="PRK01103.1"/>
    <property type="match status" value="1"/>
</dbReference>
<dbReference type="NCBIfam" id="NF010551">
    <property type="entry name" value="PRK13945.1"/>
    <property type="match status" value="1"/>
</dbReference>
<dbReference type="PANTHER" id="PTHR22993">
    <property type="entry name" value="FORMAMIDOPYRIMIDINE-DNA GLYCOSYLASE"/>
    <property type="match status" value="1"/>
</dbReference>
<dbReference type="PANTHER" id="PTHR22993:SF9">
    <property type="entry name" value="FORMAMIDOPYRIMIDINE-DNA GLYCOSYLASE"/>
    <property type="match status" value="1"/>
</dbReference>
<dbReference type="Pfam" id="PF01149">
    <property type="entry name" value="Fapy_DNA_glyco"/>
    <property type="match status" value="1"/>
</dbReference>
<dbReference type="Pfam" id="PF06831">
    <property type="entry name" value="H2TH"/>
    <property type="match status" value="1"/>
</dbReference>
<dbReference type="Pfam" id="PF06827">
    <property type="entry name" value="zf-FPG_IleRS"/>
    <property type="match status" value="1"/>
</dbReference>
<dbReference type="SMART" id="SM00898">
    <property type="entry name" value="Fapy_DNA_glyco"/>
    <property type="match status" value="1"/>
</dbReference>
<dbReference type="SMART" id="SM01232">
    <property type="entry name" value="H2TH"/>
    <property type="match status" value="1"/>
</dbReference>
<dbReference type="SUPFAM" id="SSF57716">
    <property type="entry name" value="Glucocorticoid receptor-like (DNA-binding domain)"/>
    <property type="match status" value="1"/>
</dbReference>
<dbReference type="SUPFAM" id="SSF81624">
    <property type="entry name" value="N-terminal domain of MutM-like DNA repair proteins"/>
    <property type="match status" value="1"/>
</dbReference>
<dbReference type="SUPFAM" id="SSF46946">
    <property type="entry name" value="S13-like H2TH domain"/>
    <property type="match status" value="1"/>
</dbReference>
<dbReference type="PROSITE" id="PS51068">
    <property type="entry name" value="FPG_CAT"/>
    <property type="match status" value="1"/>
</dbReference>
<dbReference type="PROSITE" id="PS01242">
    <property type="entry name" value="ZF_FPG_1"/>
    <property type="match status" value="1"/>
</dbReference>
<dbReference type="PROSITE" id="PS51066">
    <property type="entry name" value="ZF_FPG_2"/>
    <property type="match status" value="1"/>
</dbReference>
<accession>P59065</accession>
<reference key="1">
    <citation type="journal article" date="2002" name="DNA Res.">
        <title>Complete genome structure of the thermophilic cyanobacterium Thermosynechococcus elongatus BP-1.</title>
        <authorList>
            <person name="Nakamura Y."/>
            <person name="Kaneko T."/>
            <person name="Sato S."/>
            <person name="Ikeuchi M."/>
            <person name="Katoh H."/>
            <person name="Sasamoto S."/>
            <person name="Watanabe A."/>
            <person name="Iriguchi M."/>
            <person name="Kawashima K."/>
            <person name="Kimura T."/>
            <person name="Kishida Y."/>
            <person name="Kiyokawa C."/>
            <person name="Kohara M."/>
            <person name="Matsumoto M."/>
            <person name="Matsuno A."/>
            <person name="Nakazaki N."/>
            <person name="Shimpo S."/>
            <person name="Sugimoto M."/>
            <person name="Takeuchi C."/>
            <person name="Yamada M."/>
            <person name="Tabata S."/>
        </authorList>
    </citation>
    <scope>NUCLEOTIDE SEQUENCE [LARGE SCALE GENOMIC DNA]</scope>
    <source>
        <strain>NIES-2133 / IAM M-273 / BP-1</strain>
    </source>
</reference>
<protein>
    <recommendedName>
        <fullName>Formamidopyrimidine-DNA glycosylase</fullName>
        <shortName>Fapy-DNA glycosylase</shortName>
        <ecNumber>3.2.2.23</ecNumber>
    </recommendedName>
    <alternativeName>
        <fullName>DNA-(apurinic or apyrimidinic site) lyase MutM</fullName>
        <shortName>AP lyase MutM</shortName>
        <ecNumber>4.2.99.18</ecNumber>
    </alternativeName>
</protein>
<keyword id="KW-0227">DNA damage</keyword>
<keyword id="KW-0234">DNA repair</keyword>
<keyword id="KW-0238">DNA-binding</keyword>
<keyword id="KW-0326">Glycosidase</keyword>
<keyword id="KW-0378">Hydrolase</keyword>
<keyword id="KW-0456">Lyase</keyword>
<keyword id="KW-0479">Metal-binding</keyword>
<keyword id="KW-0511">Multifunctional enzyme</keyword>
<keyword id="KW-1185">Reference proteome</keyword>
<keyword id="KW-0862">Zinc</keyword>
<keyword id="KW-0863">Zinc-finger</keyword>
<feature type="initiator methionine" description="Removed" evidence="1">
    <location>
        <position position="1"/>
    </location>
</feature>
<feature type="chain" id="PRO_0000170875" description="Formamidopyrimidine-DNA glycosylase">
    <location>
        <begin position="2"/>
        <end position="284"/>
    </location>
</feature>
<feature type="zinc finger region" description="FPG-type">
    <location>
        <begin position="243"/>
        <end position="277"/>
    </location>
</feature>
<feature type="active site" description="Schiff-base intermediate with DNA" evidence="1">
    <location>
        <position position="2"/>
    </location>
</feature>
<feature type="active site" description="Proton donor" evidence="1">
    <location>
        <position position="3"/>
    </location>
</feature>
<feature type="active site" description="Proton donor; for beta-elimination activity" evidence="1">
    <location>
        <position position="60"/>
    </location>
</feature>
<feature type="active site" description="Proton donor; for delta-elimination activity" evidence="1">
    <location>
        <position position="267"/>
    </location>
</feature>
<feature type="binding site" evidence="1">
    <location>
        <position position="94"/>
    </location>
    <ligand>
        <name>DNA</name>
        <dbReference type="ChEBI" id="CHEBI:16991"/>
    </ligand>
</feature>
<feature type="binding site" evidence="1">
    <location>
        <position position="113"/>
    </location>
    <ligand>
        <name>DNA</name>
        <dbReference type="ChEBI" id="CHEBI:16991"/>
    </ligand>
</feature>
<sequence length="284" mass="31631">MPELPEVETVRRGLELVTLKQPIVDVEVLLARSIALPKEPQAFIEHLRDRAIEQWQRRGKYLLATLDDGSRLVIHLRMSGQLLWLTTPQPPCPHTRVRWFFPTRAELRFVDQRTFGRCWWLPPDCRVAEAIPALATLAPEPLSEAFTVAFLAARLAHCRRSIKTALLDQSIVAGMGNIYADESLFLSGLHPTQSAHTLTPEQVQRLHGVICQVLREGIAAGGTTIRTFMSPAGVNGHYGGQAWVYGRKGEACRVCGTTIERLRLAGRSSHYCPQCQPLSSAIGK</sequence>
<gene>
    <name type="primary">mutM</name>
    <name type="synonym">fpg</name>
    <name type="ordered locus">tll1566</name>
</gene>
<organism>
    <name type="scientific">Thermosynechococcus vestitus (strain NIES-2133 / IAM M-273 / BP-1)</name>
    <dbReference type="NCBI Taxonomy" id="197221"/>
    <lineage>
        <taxon>Bacteria</taxon>
        <taxon>Bacillati</taxon>
        <taxon>Cyanobacteriota</taxon>
        <taxon>Cyanophyceae</taxon>
        <taxon>Acaryochloridales</taxon>
        <taxon>Thermosynechococcaceae</taxon>
        <taxon>Thermosynechococcus</taxon>
    </lineage>
</organism>
<proteinExistence type="inferred from homology"/>